<comment type="function">
    <text evidence="1">Involved in protein export. Acts as a chaperone by maintaining the newly synthesized protein in an open conformation. Functions as a peptidyl-prolyl cis-trans isomerase.</text>
</comment>
<comment type="catalytic activity">
    <reaction evidence="1">
        <text>[protein]-peptidylproline (omega=180) = [protein]-peptidylproline (omega=0)</text>
        <dbReference type="Rhea" id="RHEA:16237"/>
        <dbReference type="Rhea" id="RHEA-COMP:10747"/>
        <dbReference type="Rhea" id="RHEA-COMP:10748"/>
        <dbReference type="ChEBI" id="CHEBI:83833"/>
        <dbReference type="ChEBI" id="CHEBI:83834"/>
        <dbReference type="EC" id="5.2.1.8"/>
    </reaction>
</comment>
<comment type="subunit">
    <text evidence="1">Homodimer and monomer. In vivo most of the ribosomes are in complex with monomeric TF. Uncomplexed TF, however, is in a monomer-dimer equilibrium with approximately two thirds of TF existing in a dimeric state.</text>
</comment>
<comment type="interaction">
    <interactant intactId="EBI-4407188">
        <id>C4ZTJ3</id>
    </interactant>
    <interactant intactId="EBI-4406374">
        <id>P69853</id>
        <label>dmsD</label>
    </interactant>
    <organismsDiffer>true</organismsDiffer>
    <experiments>3</experiments>
</comment>
<comment type="subcellular location">
    <subcellularLocation>
        <location>Cytoplasm</location>
    </subcellularLocation>
    <text evidence="1">About half TF is bound to the ribosome near the polypeptide exit tunnel while the other half is free in the cytoplasm.</text>
</comment>
<comment type="domain">
    <text evidence="1">Consists of 3 domains; the N-terminus binds the ribosome, the middle domain has PPIase activity, while the C-terminus has intrinsic chaperone activity on its own.</text>
</comment>
<comment type="similarity">
    <text evidence="1">Belongs to the FKBP-type PPIase family. Tig subfamily.</text>
</comment>
<accession>C4ZTJ3</accession>
<evidence type="ECO:0000255" key="1">
    <source>
        <dbReference type="HAMAP-Rule" id="MF_00303"/>
    </source>
</evidence>
<reference key="1">
    <citation type="journal article" date="2009" name="J. Bacteriol.">
        <title>Genomic sequencing reveals regulatory mutations and recombinational events in the widely used MC4100 lineage of Escherichia coli K-12.</title>
        <authorList>
            <person name="Ferenci T."/>
            <person name="Zhou Z."/>
            <person name="Betteridge T."/>
            <person name="Ren Y."/>
            <person name="Liu Y."/>
            <person name="Feng L."/>
            <person name="Reeves P.R."/>
            <person name="Wang L."/>
        </authorList>
    </citation>
    <scope>NUCLEOTIDE SEQUENCE [LARGE SCALE GENOMIC DNA]</scope>
    <source>
        <strain>K12 / MC4100 / BW2952</strain>
    </source>
</reference>
<gene>
    <name evidence="1" type="primary">tig</name>
    <name type="ordered locus">BWG_0318</name>
</gene>
<proteinExistence type="evidence at protein level"/>
<dbReference type="EC" id="5.2.1.8" evidence="1"/>
<dbReference type="EMBL" id="CP001396">
    <property type="protein sequence ID" value="ACR63987.1"/>
    <property type="molecule type" value="Genomic_DNA"/>
</dbReference>
<dbReference type="RefSeq" id="WP_001198386.1">
    <property type="nucleotide sequence ID" value="NC_012759.1"/>
</dbReference>
<dbReference type="SMR" id="C4ZTJ3"/>
<dbReference type="IntAct" id="C4ZTJ3">
    <property type="interactions" value="1"/>
</dbReference>
<dbReference type="GeneID" id="75202861"/>
<dbReference type="KEGG" id="ebw:BWG_0318"/>
<dbReference type="HOGENOM" id="CLU_033058_2_0_6"/>
<dbReference type="GO" id="GO:0005737">
    <property type="term" value="C:cytoplasm"/>
    <property type="evidence" value="ECO:0007669"/>
    <property type="project" value="UniProtKB-SubCell"/>
</dbReference>
<dbReference type="GO" id="GO:0003755">
    <property type="term" value="F:peptidyl-prolyl cis-trans isomerase activity"/>
    <property type="evidence" value="ECO:0007669"/>
    <property type="project" value="UniProtKB-UniRule"/>
</dbReference>
<dbReference type="GO" id="GO:0044183">
    <property type="term" value="F:protein folding chaperone"/>
    <property type="evidence" value="ECO:0007669"/>
    <property type="project" value="TreeGrafter"/>
</dbReference>
<dbReference type="GO" id="GO:0043022">
    <property type="term" value="F:ribosome binding"/>
    <property type="evidence" value="ECO:0007669"/>
    <property type="project" value="TreeGrafter"/>
</dbReference>
<dbReference type="GO" id="GO:0051083">
    <property type="term" value="P:'de novo' cotranslational protein folding"/>
    <property type="evidence" value="ECO:0007669"/>
    <property type="project" value="TreeGrafter"/>
</dbReference>
<dbReference type="GO" id="GO:0051301">
    <property type="term" value="P:cell division"/>
    <property type="evidence" value="ECO:0007669"/>
    <property type="project" value="UniProtKB-KW"/>
</dbReference>
<dbReference type="GO" id="GO:0061077">
    <property type="term" value="P:chaperone-mediated protein folding"/>
    <property type="evidence" value="ECO:0007669"/>
    <property type="project" value="TreeGrafter"/>
</dbReference>
<dbReference type="GO" id="GO:0015031">
    <property type="term" value="P:protein transport"/>
    <property type="evidence" value="ECO:0007669"/>
    <property type="project" value="UniProtKB-UniRule"/>
</dbReference>
<dbReference type="GO" id="GO:0043335">
    <property type="term" value="P:protein unfolding"/>
    <property type="evidence" value="ECO:0007669"/>
    <property type="project" value="TreeGrafter"/>
</dbReference>
<dbReference type="FunFam" id="1.10.3120.10:FF:000001">
    <property type="entry name" value="Trigger factor"/>
    <property type="match status" value="1"/>
</dbReference>
<dbReference type="FunFam" id="3.10.50.40:FF:000001">
    <property type="entry name" value="Trigger factor"/>
    <property type="match status" value="1"/>
</dbReference>
<dbReference type="FunFam" id="3.30.70.1050:FF:000001">
    <property type="entry name" value="Trigger factor"/>
    <property type="match status" value="1"/>
</dbReference>
<dbReference type="Gene3D" id="3.10.50.40">
    <property type="match status" value="1"/>
</dbReference>
<dbReference type="Gene3D" id="3.30.70.1050">
    <property type="entry name" value="Trigger factor ribosome-binding domain"/>
    <property type="match status" value="1"/>
</dbReference>
<dbReference type="Gene3D" id="1.10.3120.10">
    <property type="entry name" value="Trigger factor, C-terminal domain"/>
    <property type="match status" value="1"/>
</dbReference>
<dbReference type="HAMAP" id="MF_00303">
    <property type="entry name" value="Trigger_factor_Tig"/>
    <property type="match status" value="1"/>
</dbReference>
<dbReference type="InterPro" id="IPR046357">
    <property type="entry name" value="PPIase_dom_sf"/>
</dbReference>
<dbReference type="InterPro" id="IPR001179">
    <property type="entry name" value="PPIase_FKBP_dom"/>
</dbReference>
<dbReference type="InterPro" id="IPR005215">
    <property type="entry name" value="Trig_fac"/>
</dbReference>
<dbReference type="InterPro" id="IPR008880">
    <property type="entry name" value="Trigger_fac_C"/>
</dbReference>
<dbReference type="InterPro" id="IPR037041">
    <property type="entry name" value="Trigger_fac_C_sf"/>
</dbReference>
<dbReference type="InterPro" id="IPR008881">
    <property type="entry name" value="Trigger_fac_ribosome-bd_bac"/>
</dbReference>
<dbReference type="InterPro" id="IPR036611">
    <property type="entry name" value="Trigger_fac_ribosome-bd_sf"/>
</dbReference>
<dbReference type="InterPro" id="IPR027304">
    <property type="entry name" value="Trigger_fact/SurA_dom_sf"/>
</dbReference>
<dbReference type="NCBIfam" id="TIGR00115">
    <property type="entry name" value="tig"/>
    <property type="match status" value="1"/>
</dbReference>
<dbReference type="PANTHER" id="PTHR30560">
    <property type="entry name" value="TRIGGER FACTOR CHAPERONE AND PEPTIDYL-PROLYL CIS/TRANS ISOMERASE"/>
    <property type="match status" value="1"/>
</dbReference>
<dbReference type="PANTHER" id="PTHR30560:SF3">
    <property type="entry name" value="TRIGGER FACTOR-LIKE PROTEIN TIG, CHLOROPLASTIC"/>
    <property type="match status" value="1"/>
</dbReference>
<dbReference type="Pfam" id="PF00254">
    <property type="entry name" value="FKBP_C"/>
    <property type="match status" value="1"/>
</dbReference>
<dbReference type="Pfam" id="PF05698">
    <property type="entry name" value="Trigger_C"/>
    <property type="match status" value="1"/>
</dbReference>
<dbReference type="Pfam" id="PF05697">
    <property type="entry name" value="Trigger_N"/>
    <property type="match status" value="1"/>
</dbReference>
<dbReference type="PIRSF" id="PIRSF003095">
    <property type="entry name" value="Trigger_factor"/>
    <property type="match status" value="1"/>
</dbReference>
<dbReference type="SUPFAM" id="SSF54534">
    <property type="entry name" value="FKBP-like"/>
    <property type="match status" value="1"/>
</dbReference>
<dbReference type="SUPFAM" id="SSF109998">
    <property type="entry name" value="Triger factor/SurA peptide-binding domain-like"/>
    <property type="match status" value="1"/>
</dbReference>
<dbReference type="SUPFAM" id="SSF102735">
    <property type="entry name" value="Trigger factor ribosome-binding domain"/>
    <property type="match status" value="1"/>
</dbReference>
<dbReference type="PROSITE" id="PS50059">
    <property type="entry name" value="FKBP_PPIASE"/>
    <property type="match status" value="1"/>
</dbReference>
<keyword id="KW-0131">Cell cycle</keyword>
<keyword id="KW-0132">Cell division</keyword>
<keyword id="KW-0143">Chaperone</keyword>
<keyword id="KW-0963">Cytoplasm</keyword>
<keyword id="KW-0413">Isomerase</keyword>
<keyword id="KW-0697">Rotamase</keyword>
<organism>
    <name type="scientific">Escherichia coli (strain K12 / MC4100 / BW2952)</name>
    <dbReference type="NCBI Taxonomy" id="595496"/>
    <lineage>
        <taxon>Bacteria</taxon>
        <taxon>Pseudomonadati</taxon>
        <taxon>Pseudomonadota</taxon>
        <taxon>Gammaproteobacteria</taxon>
        <taxon>Enterobacterales</taxon>
        <taxon>Enterobacteriaceae</taxon>
        <taxon>Escherichia</taxon>
    </lineage>
</organism>
<feature type="chain" id="PRO_1000204986" description="Trigger factor">
    <location>
        <begin position="1"/>
        <end position="432"/>
    </location>
</feature>
<feature type="domain" description="PPIase FKBP-type" evidence="1">
    <location>
        <begin position="161"/>
        <end position="246"/>
    </location>
</feature>
<protein>
    <recommendedName>
        <fullName evidence="1">Trigger factor</fullName>
        <shortName evidence="1">TF</shortName>
        <ecNumber evidence="1">5.2.1.8</ecNumber>
    </recommendedName>
    <alternativeName>
        <fullName evidence="1">PPIase</fullName>
    </alternativeName>
</protein>
<sequence length="432" mass="48193">MQVSVETTQGLGRRVTITIAADSIETAVKSELVNVAKKVRIDGFRKGKVPMNIVAQRYGASVRQDVLGDLMSRNFIDAIIKEKINPAGAPTYVPGEYKLGEDFTYSVEFEVYPEVELQGLEAIEVEKPIVEVTDADVDGMLDTLRKQQATWKEKDGAVEAEDRVTIDFTGSVDGEEFEGGKASDFVLAMGQGRMIPGFEDGIKGHKAGEEFTIDVTFPEEYHAENLKGKAAKFAINLKKVEERELPELTAEFIKRFGVEDGSVEGLRAEVRKNMERELKSAIRNRVKSQAIEGLVKANDIDVPAALIDSEIDVLRRQAAQRFGGNEKQALELPRELFEEQAKRRVVVGLLLGEVIRTNELKADEERVKGLIEEMASAYEDPKEVIEFYSKNKELMDNMRNVALEEQAVEAVLAKAKVTEKETTFNELMNQQA</sequence>
<name>TIG_ECOBW</name>